<reference key="1">
    <citation type="journal article" date="2002" name="DNA Res.">
        <title>Complete genomic sequence of nitrogen-fixing symbiotic bacterium Bradyrhizobium japonicum USDA110.</title>
        <authorList>
            <person name="Kaneko T."/>
            <person name="Nakamura Y."/>
            <person name="Sato S."/>
            <person name="Minamisawa K."/>
            <person name="Uchiumi T."/>
            <person name="Sasamoto S."/>
            <person name="Watanabe A."/>
            <person name="Idesawa K."/>
            <person name="Iriguchi M."/>
            <person name="Kawashima K."/>
            <person name="Kohara M."/>
            <person name="Matsumoto M."/>
            <person name="Shimpo S."/>
            <person name="Tsuruoka H."/>
            <person name="Wada T."/>
            <person name="Yamada M."/>
            <person name="Tabata S."/>
        </authorList>
    </citation>
    <scope>NUCLEOTIDE SEQUENCE [LARGE SCALE GENOMIC DNA]</scope>
    <source>
        <strain>JCM 10833 / BCRC 13528 / IAM 13628 / NBRC 14792 / USDA 110</strain>
    </source>
</reference>
<comment type="function">
    <text evidence="1">Involved in the glycolate utilization. Catalyzes the condensation and subsequent hydrolysis of acetyl-coenzyme A (acetyl-CoA) and glyoxylate to form malate and CoA.</text>
</comment>
<comment type="catalytic activity">
    <reaction evidence="1">
        <text>glyoxylate + acetyl-CoA + H2O = (S)-malate + CoA + H(+)</text>
        <dbReference type="Rhea" id="RHEA:18181"/>
        <dbReference type="ChEBI" id="CHEBI:15377"/>
        <dbReference type="ChEBI" id="CHEBI:15378"/>
        <dbReference type="ChEBI" id="CHEBI:15589"/>
        <dbReference type="ChEBI" id="CHEBI:36655"/>
        <dbReference type="ChEBI" id="CHEBI:57287"/>
        <dbReference type="ChEBI" id="CHEBI:57288"/>
        <dbReference type="EC" id="2.3.3.9"/>
    </reaction>
</comment>
<comment type="cofactor">
    <cofactor evidence="1">
        <name>Mg(2+)</name>
        <dbReference type="ChEBI" id="CHEBI:18420"/>
    </cofactor>
</comment>
<comment type="pathway">
    <text evidence="1">Carbohydrate metabolism; glyoxylate cycle; (S)-malate from isocitrate: step 2/2.</text>
</comment>
<comment type="subunit">
    <text evidence="1">Monomer.</text>
</comment>
<comment type="subcellular location">
    <subcellularLocation>
        <location evidence="1">Cytoplasm</location>
    </subcellularLocation>
</comment>
<comment type="similarity">
    <text evidence="1">Belongs to the malate synthase family. GlcB subfamily.</text>
</comment>
<protein>
    <recommendedName>
        <fullName evidence="1">Malate synthase G</fullName>
        <ecNumber evidence="1">2.3.3.9</ecNumber>
    </recommendedName>
</protein>
<proteinExistence type="inferred from homology"/>
<accession>Q89UE3</accession>
<name>MASZ_BRADU</name>
<sequence>MKRVDAHGLKIAPVLFDFIAKEAAPKTGIAPDAFWAGVAAIIKDLGPKNRALLALRDALQAKIDDWHRANKGKAFDLNAYTAFLKEIGYLVPEPATQKVETANVDEEIGKICGPQLVVPLTNARYALNAANARWGSLYDAFYGTDAIPHDPSESGKGYNKARGDKVIAKAKAFLDAAVPLATGSHTDVTAYSIVAGQLAVKLKSGNATALKNAAQFAGFQGDAAAPSAVLLVNNGLHVEVTINRNSAIGKDDPAGVADMVMEAAVSTILDMEDSVAAVDAEDKVLVYRNTLGLMNGTLSADFEKGGKTLTRSLNADRSYKTPDGKGEVKLHGRSLLLMRNCGHHMFTDAVLDERGEEVPEGLLDAAVSGLLAIHDLKGNSKVKNSRTGSAYIVKPKMHGPDEVSFTCEIFDRVEKMLGLPENTLKVGIMDEERRTTVNLKACIQRASKRIMFINTGFLDRTGDEIHTSMEAGPMIRKNEMKAQAWIKAYEDWNVDMGLIDGLPGHAQIGKGMWAAPDKMADMLAQKLAHPQAGATTAWVPSPTAATLHALHYHQVNVIARQEELTKGGPRAKLSDILTIPVSKSNWAPDDVKQEIDNNCQGILGYVVRWIDQGVGCSKVPDIHDVGLMEDRATLRISSQHLANWLHQGVITEAQVMESLKRMAVVVDKQNAGDAIYKPMAPAFDGVAFKAACDLIFKGREQPNGYTEYILTARRREAKAAG</sequence>
<dbReference type="EC" id="2.3.3.9" evidence="1"/>
<dbReference type="EMBL" id="BA000040">
    <property type="protein sequence ID" value="BAC46739.1"/>
    <property type="molecule type" value="Genomic_DNA"/>
</dbReference>
<dbReference type="RefSeq" id="NP_768114.1">
    <property type="nucleotide sequence ID" value="NC_004463.1"/>
</dbReference>
<dbReference type="RefSeq" id="WP_011084290.1">
    <property type="nucleotide sequence ID" value="NC_004463.1"/>
</dbReference>
<dbReference type="SMR" id="Q89UE3"/>
<dbReference type="FunCoup" id="Q89UE3">
    <property type="interactions" value="164"/>
</dbReference>
<dbReference type="STRING" id="224911.AAV28_04320"/>
<dbReference type="EnsemblBacteria" id="BAC46739">
    <property type="protein sequence ID" value="BAC46739"/>
    <property type="gene ID" value="BAC46739"/>
</dbReference>
<dbReference type="GeneID" id="46488750"/>
<dbReference type="KEGG" id="bja:bll1474"/>
<dbReference type="PATRIC" id="fig|224911.44.peg.908"/>
<dbReference type="eggNOG" id="COG2225">
    <property type="taxonomic scope" value="Bacteria"/>
</dbReference>
<dbReference type="HOGENOM" id="CLU_028446_1_0_5"/>
<dbReference type="InParanoid" id="Q89UE3"/>
<dbReference type="OrthoDB" id="9762054at2"/>
<dbReference type="PhylomeDB" id="Q89UE3"/>
<dbReference type="UniPathway" id="UPA00703">
    <property type="reaction ID" value="UER00720"/>
</dbReference>
<dbReference type="Proteomes" id="UP000002526">
    <property type="component" value="Chromosome"/>
</dbReference>
<dbReference type="GO" id="GO:0005829">
    <property type="term" value="C:cytosol"/>
    <property type="evidence" value="ECO:0000318"/>
    <property type="project" value="GO_Central"/>
</dbReference>
<dbReference type="GO" id="GO:0000287">
    <property type="term" value="F:magnesium ion binding"/>
    <property type="evidence" value="ECO:0000318"/>
    <property type="project" value="GO_Central"/>
</dbReference>
<dbReference type="GO" id="GO:0004474">
    <property type="term" value="F:malate synthase activity"/>
    <property type="evidence" value="ECO:0000318"/>
    <property type="project" value="GO_Central"/>
</dbReference>
<dbReference type="GO" id="GO:0009436">
    <property type="term" value="P:glyoxylate catabolic process"/>
    <property type="evidence" value="ECO:0000318"/>
    <property type="project" value="GO_Central"/>
</dbReference>
<dbReference type="GO" id="GO:0006097">
    <property type="term" value="P:glyoxylate cycle"/>
    <property type="evidence" value="ECO:0007669"/>
    <property type="project" value="UniProtKB-UniRule"/>
</dbReference>
<dbReference type="GO" id="GO:0006099">
    <property type="term" value="P:tricarboxylic acid cycle"/>
    <property type="evidence" value="ECO:0007669"/>
    <property type="project" value="UniProtKB-KW"/>
</dbReference>
<dbReference type="FunFam" id="3.20.20.360:FF:000002">
    <property type="entry name" value="Malate synthase G"/>
    <property type="match status" value="1"/>
</dbReference>
<dbReference type="Gene3D" id="3.20.20.360">
    <property type="entry name" value="Malate synthase, domain 3"/>
    <property type="match status" value="2"/>
</dbReference>
<dbReference type="Gene3D" id="1.20.1220.12">
    <property type="entry name" value="Malate synthase, domain III"/>
    <property type="match status" value="1"/>
</dbReference>
<dbReference type="HAMAP" id="MF_00641">
    <property type="entry name" value="Malate_synth_G"/>
    <property type="match status" value="1"/>
</dbReference>
<dbReference type="InterPro" id="IPR044856">
    <property type="entry name" value="Malate_synth_C_sf"/>
</dbReference>
<dbReference type="InterPro" id="IPR011076">
    <property type="entry name" value="Malate_synth_sf"/>
</dbReference>
<dbReference type="InterPro" id="IPR001465">
    <property type="entry name" value="Malate_synthase_TIM"/>
</dbReference>
<dbReference type="InterPro" id="IPR006253">
    <property type="entry name" value="Malate_synthG"/>
</dbReference>
<dbReference type="InterPro" id="IPR048355">
    <property type="entry name" value="MS_C"/>
</dbReference>
<dbReference type="InterPro" id="IPR048356">
    <property type="entry name" value="MS_N"/>
</dbReference>
<dbReference type="InterPro" id="IPR046363">
    <property type="entry name" value="MS_N_TIM-barrel_dom"/>
</dbReference>
<dbReference type="InterPro" id="IPR048357">
    <property type="entry name" value="MSG_insertion"/>
</dbReference>
<dbReference type="NCBIfam" id="TIGR01345">
    <property type="entry name" value="malate_syn_G"/>
    <property type="match status" value="1"/>
</dbReference>
<dbReference type="NCBIfam" id="NF002825">
    <property type="entry name" value="PRK02999.1"/>
    <property type="match status" value="1"/>
</dbReference>
<dbReference type="PANTHER" id="PTHR42739">
    <property type="entry name" value="MALATE SYNTHASE G"/>
    <property type="match status" value="1"/>
</dbReference>
<dbReference type="PANTHER" id="PTHR42739:SF1">
    <property type="entry name" value="MALATE SYNTHASE G"/>
    <property type="match status" value="1"/>
</dbReference>
<dbReference type="Pfam" id="PF20659">
    <property type="entry name" value="MS_C"/>
    <property type="match status" value="1"/>
</dbReference>
<dbReference type="Pfam" id="PF20656">
    <property type="entry name" value="MS_N"/>
    <property type="match status" value="1"/>
</dbReference>
<dbReference type="Pfam" id="PF01274">
    <property type="entry name" value="MS_TIM-barrel"/>
    <property type="match status" value="1"/>
</dbReference>
<dbReference type="Pfam" id="PF20658">
    <property type="entry name" value="MSG_insertion"/>
    <property type="match status" value="1"/>
</dbReference>
<dbReference type="SUPFAM" id="SSF51645">
    <property type="entry name" value="Malate synthase G"/>
    <property type="match status" value="1"/>
</dbReference>
<gene>
    <name evidence="1" type="primary">glcB</name>
    <name type="ordered locus">bll1474</name>
</gene>
<evidence type="ECO:0000255" key="1">
    <source>
        <dbReference type="HAMAP-Rule" id="MF_00641"/>
    </source>
</evidence>
<feature type="chain" id="PRO_0000166881" description="Malate synthase G">
    <location>
        <begin position="1"/>
        <end position="721"/>
    </location>
</feature>
<feature type="active site" description="Proton acceptor" evidence="1">
    <location>
        <position position="339"/>
    </location>
</feature>
<feature type="active site" description="Proton donor" evidence="1">
    <location>
        <position position="630"/>
    </location>
</feature>
<feature type="binding site" evidence="1">
    <location>
        <position position="117"/>
    </location>
    <ligand>
        <name>acetyl-CoA</name>
        <dbReference type="ChEBI" id="CHEBI:57288"/>
    </ligand>
</feature>
<feature type="binding site" evidence="1">
    <location>
        <begin position="124"/>
        <end position="125"/>
    </location>
    <ligand>
        <name>acetyl-CoA</name>
        <dbReference type="ChEBI" id="CHEBI:57288"/>
    </ligand>
</feature>
<feature type="binding site" evidence="1">
    <location>
        <position position="274"/>
    </location>
    <ligand>
        <name>acetyl-CoA</name>
        <dbReference type="ChEBI" id="CHEBI:57288"/>
    </ligand>
</feature>
<feature type="binding site" evidence="1">
    <location>
        <position position="311"/>
    </location>
    <ligand>
        <name>acetyl-CoA</name>
        <dbReference type="ChEBI" id="CHEBI:57288"/>
    </ligand>
</feature>
<feature type="binding site" evidence="1">
    <location>
        <position position="339"/>
    </location>
    <ligand>
        <name>glyoxylate</name>
        <dbReference type="ChEBI" id="CHEBI:36655"/>
    </ligand>
</feature>
<feature type="binding site" evidence="1">
    <location>
        <position position="431"/>
    </location>
    <ligand>
        <name>glyoxylate</name>
        <dbReference type="ChEBI" id="CHEBI:36655"/>
    </ligand>
</feature>
<feature type="binding site" evidence="1">
    <location>
        <position position="431"/>
    </location>
    <ligand>
        <name>Mg(2+)</name>
        <dbReference type="ChEBI" id="CHEBI:18420"/>
    </ligand>
</feature>
<feature type="binding site" evidence="1">
    <location>
        <begin position="456"/>
        <end position="459"/>
    </location>
    <ligand>
        <name>glyoxylate</name>
        <dbReference type="ChEBI" id="CHEBI:36655"/>
    </ligand>
</feature>
<feature type="binding site" evidence="1">
    <location>
        <position position="459"/>
    </location>
    <ligand>
        <name>Mg(2+)</name>
        <dbReference type="ChEBI" id="CHEBI:18420"/>
    </ligand>
</feature>
<feature type="binding site" evidence="1">
    <location>
        <position position="540"/>
    </location>
    <ligand>
        <name>acetyl-CoA</name>
        <dbReference type="ChEBI" id="CHEBI:57288"/>
    </ligand>
</feature>
<feature type="modified residue" description="Cysteine sulfenic acid (-SOH)" evidence="1">
    <location>
        <position position="616"/>
    </location>
</feature>
<organism>
    <name type="scientific">Bradyrhizobium diazoefficiens (strain JCM 10833 / BCRC 13528 / IAM 13628 / NBRC 14792 / USDA 110)</name>
    <dbReference type="NCBI Taxonomy" id="224911"/>
    <lineage>
        <taxon>Bacteria</taxon>
        <taxon>Pseudomonadati</taxon>
        <taxon>Pseudomonadota</taxon>
        <taxon>Alphaproteobacteria</taxon>
        <taxon>Hyphomicrobiales</taxon>
        <taxon>Nitrobacteraceae</taxon>
        <taxon>Bradyrhizobium</taxon>
    </lineage>
</organism>
<keyword id="KW-0963">Cytoplasm</keyword>
<keyword id="KW-0329">Glyoxylate bypass</keyword>
<keyword id="KW-0460">Magnesium</keyword>
<keyword id="KW-0479">Metal-binding</keyword>
<keyword id="KW-0558">Oxidation</keyword>
<keyword id="KW-1185">Reference proteome</keyword>
<keyword id="KW-0808">Transferase</keyword>
<keyword id="KW-0816">Tricarboxylic acid cycle</keyword>